<name>FADA_YERPP</name>
<dbReference type="EC" id="2.3.1.16" evidence="1"/>
<dbReference type="EMBL" id="CP000668">
    <property type="protein sequence ID" value="ABP41740.1"/>
    <property type="molecule type" value="Genomic_DNA"/>
</dbReference>
<dbReference type="RefSeq" id="WP_002211545.1">
    <property type="nucleotide sequence ID" value="NZ_CP009715.1"/>
</dbReference>
<dbReference type="SMR" id="A4TR28"/>
<dbReference type="GeneID" id="57974941"/>
<dbReference type="KEGG" id="ypp:YPDSF_3387"/>
<dbReference type="PATRIC" id="fig|386656.14.peg.941"/>
<dbReference type="UniPathway" id="UPA00659"/>
<dbReference type="GO" id="GO:0005737">
    <property type="term" value="C:cytoplasm"/>
    <property type="evidence" value="ECO:0007669"/>
    <property type="project" value="UniProtKB-SubCell"/>
</dbReference>
<dbReference type="GO" id="GO:0003988">
    <property type="term" value="F:acetyl-CoA C-acyltransferase activity"/>
    <property type="evidence" value="ECO:0007669"/>
    <property type="project" value="UniProtKB-UniRule"/>
</dbReference>
<dbReference type="GO" id="GO:0006635">
    <property type="term" value="P:fatty acid beta-oxidation"/>
    <property type="evidence" value="ECO:0007669"/>
    <property type="project" value="UniProtKB-UniRule"/>
</dbReference>
<dbReference type="GO" id="GO:0010124">
    <property type="term" value="P:phenylacetate catabolic process"/>
    <property type="evidence" value="ECO:0007669"/>
    <property type="project" value="TreeGrafter"/>
</dbReference>
<dbReference type="CDD" id="cd00751">
    <property type="entry name" value="thiolase"/>
    <property type="match status" value="1"/>
</dbReference>
<dbReference type="FunFam" id="3.40.47.10:FF:000010">
    <property type="entry name" value="Acetyl-CoA acetyltransferase (Thiolase)"/>
    <property type="match status" value="1"/>
</dbReference>
<dbReference type="Gene3D" id="3.40.47.10">
    <property type="match status" value="2"/>
</dbReference>
<dbReference type="HAMAP" id="MF_01620">
    <property type="entry name" value="FadA"/>
    <property type="match status" value="1"/>
</dbReference>
<dbReference type="InterPro" id="IPR012805">
    <property type="entry name" value="FadA"/>
</dbReference>
<dbReference type="InterPro" id="IPR002155">
    <property type="entry name" value="Thiolase"/>
</dbReference>
<dbReference type="InterPro" id="IPR016039">
    <property type="entry name" value="Thiolase-like"/>
</dbReference>
<dbReference type="InterPro" id="IPR050215">
    <property type="entry name" value="Thiolase-like_sf_Thiolase"/>
</dbReference>
<dbReference type="InterPro" id="IPR020615">
    <property type="entry name" value="Thiolase_acyl_enz_int_AS"/>
</dbReference>
<dbReference type="InterPro" id="IPR020610">
    <property type="entry name" value="Thiolase_AS"/>
</dbReference>
<dbReference type="InterPro" id="IPR020617">
    <property type="entry name" value="Thiolase_C"/>
</dbReference>
<dbReference type="InterPro" id="IPR020613">
    <property type="entry name" value="Thiolase_CS"/>
</dbReference>
<dbReference type="InterPro" id="IPR020616">
    <property type="entry name" value="Thiolase_N"/>
</dbReference>
<dbReference type="NCBIfam" id="TIGR01930">
    <property type="entry name" value="AcCoA-C-Actrans"/>
    <property type="match status" value="1"/>
</dbReference>
<dbReference type="NCBIfam" id="TIGR02445">
    <property type="entry name" value="fadA"/>
    <property type="match status" value="1"/>
</dbReference>
<dbReference type="NCBIfam" id="NF006510">
    <property type="entry name" value="PRK08947.1"/>
    <property type="match status" value="1"/>
</dbReference>
<dbReference type="PANTHER" id="PTHR43853:SF11">
    <property type="entry name" value="3-KETOACYL-COA THIOLASE FADA"/>
    <property type="match status" value="1"/>
</dbReference>
<dbReference type="PANTHER" id="PTHR43853">
    <property type="entry name" value="3-KETOACYL-COA THIOLASE, PEROXISOMAL"/>
    <property type="match status" value="1"/>
</dbReference>
<dbReference type="Pfam" id="PF02803">
    <property type="entry name" value="Thiolase_C"/>
    <property type="match status" value="1"/>
</dbReference>
<dbReference type="Pfam" id="PF00108">
    <property type="entry name" value="Thiolase_N"/>
    <property type="match status" value="1"/>
</dbReference>
<dbReference type="PIRSF" id="PIRSF000429">
    <property type="entry name" value="Ac-CoA_Ac_transf"/>
    <property type="match status" value="1"/>
</dbReference>
<dbReference type="SUPFAM" id="SSF53901">
    <property type="entry name" value="Thiolase-like"/>
    <property type="match status" value="2"/>
</dbReference>
<dbReference type="PROSITE" id="PS00098">
    <property type="entry name" value="THIOLASE_1"/>
    <property type="match status" value="1"/>
</dbReference>
<dbReference type="PROSITE" id="PS00737">
    <property type="entry name" value="THIOLASE_2"/>
    <property type="match status" value="1"/>
</dbReference>
<dbReference type="PROSITE" id="PS00099">
    <property type="entry name" value="THIOLASE_3"/>
    <property type="match status" value="1"/>
</dbReference>
<comment type="function">
    <text evidence="1">Catalyzes the final step of fatty acid oxidation in which acetyl-CoA is released and the CoA ester of a fatty acid two carbons shorter is formed.</text>
</comment>
<comment type="catalytic activity">
    <reaction evidence="1">
        <text>an acyl-CoA + acetyl-CoA = a 3-oxoacyl-CoA + CoA</text>
        <dbReference type="Rhea" id="RHEA:21564"/>
        <dbReference type="ChEBI" id="CHEBI:57287"/>
        <dbReference type="ChEBI" id="CHEBI:57288"/>
        <dbReference type="ChEBI" id="CHEBI:58342"/>
        <dbReference type="ChEBI" id="CHEBI:90726"/>
        <dbReference type="EC" id="2.3.1.16"/>
    </reaction>
</comment>
<comment type="pathway">
    <text evidence="1">Lipid metabolism; fatty acid beta-oxidation.</text>
</comment>
<comment type="subunit">
    <text evidence="1">Heterotetramer of two alpha chains (FadB) and two beta chains (FadA).</text>
</comment>
<comment type="subcellular location">
    <subcellularLocation>
        <location evidence="1">Cytoplasm</location>
    </subcellularLocation>
</comment>
<comment type="similarity">
    <text evidence="1">Belongs to the thiolase-like superfamily. Thiolase family.</text>
</comment>
<sequence length="387" mass="40917">MENVVIIDAVRTPMGRSKGGAFRHVRAEDLSAHLMRAVISRNPGLNAAEIDDIYWGCVQQTLEQGFNIARNASLLAEIPHSVPAVTVNRLCGSSMQALHDGARAIMVGDAKISLIGGVEHMGHVPMNHGVDFHPGMGRTVAKAAGMMGLTAEMLAKIHNISRQSQDEFAFRSHQRAYAATQAGHFAKEIVATNGHDAEGVLKRFDFDEVIRPETNLSGLAALRPAFDPVNGTVTAGTSSALSDGASAMLIMSESRAKSLGLTPRARIRSMAVVGCDPSIMGYGPVPASQLALKRAGLELADIGLFELNEAFAAQSLACLKGLGLLESMDDKVNLNGGAIALGHPLGCSGARISTTLLNLMERRDVQFGLATMCIGLGQGIATVFERL</sequence>
<gene>
    <name evidence="1" type="primary">fadA</name>
    <name type="ordered locus">YPDSF_3387</name>
</gene>
<evidence type="ECO:0000255" key="1">
    <source>
        <dbReference type="HAMAP-Rule" id="MF_01620"/>
    </source>
</evidence>
<reference key="1">
    <citation type="submission" date="2007-02" db="EMBL/GenBank/DDBJ databases">
        <title>Complete sequence of chromosome of Yersinia pestis Pestoides F.</title>
        <authorList>
            <consortium name="US DOE Joint Genome Institute"/>
            <person name="Copeland A."/>
            <person name="Lucas S."/>
            <person name="Lapidus A."/>
            <person name="Barry K."/>
            <person name="Detter J.C."/>
            <person name="Glavina del Rio T."/>
            <person name="Hammon N."/>
            <person name="Israni S."/>
            <person name="Dalin E."/>
            <person name="Tice H."/>
            <person name="Pitluck S."/>
            <person name="Di Bartolo G."/>
            <person name="Chain P."/>
            <person name="Malfatti S."/>
            <person name="Shin M."/>
            <person name="Vergez L."/>
            <person name="Schmutz J."/>
            <person name="Larimer F."/>
            <person name="Land M."/>
            <person name="Hauser L."/>
            <person name="Worsham P."/>
            <person name="Chu M."/>
            <person name="Bearden S."/>
            <person name="Garcia E."/>
            <person name="Richardson P."/>
        </authorList>
    </citation>
    <scope>NUCLEOTIDE SEQUENCE [LARGE SCALE GENOMIC DNA]</scope>
    <source>
        <strain>Pestoides F</strain>
    </source>
</reference>
<accession>A4TR28</accession>
<organism>
    <name type="scientific">Yersinia pestis (strain Pestoides F)</name>
    <dbReference type="NCBI Taxonomy" id="386656"/>
    <lineage>
        <taxon>Bacteria</taxon>
        <taxon>Pseudomonadati</taxon>
        <taxon>Pseudomonadota</taxon>
        <taxon>Gammaproteobacteria</taxon>
        <taxon>Enterobacterales</taxon>
        <taxon>Yersiniaceae</taxon>
        <taxon>Yersinia</taxon>
    </lineage>
</organism>
<protein>
    <recommendedName>
        <fullName evidence="1">3-ketoacyl-CoA thiolase</fullName>
        <ecNumber evidence="1">2.3.1.16</ecNumber>
    </recommendedName>
    <alternativeName>
        <fullName evidence="1">Acetyl-CoA acyltransferase</fullName>
    </alternativeName>
    <alternativeName>
        <fullName evidence="1">Beta-ketothiolase</fullName>
    </alternativeName>
    <alternativeName>
        <fullName evidence="1">Fatty acid oxidation complex subunit beta</fullName>
    </alternativeName>
</protein>
<proteinExistence type="inferred from homology"/>
<feature type="chain" id="PRO_0000323557" description="3-ketoacyl-CoA thiolase">
    <location>
        <begin position="1"/>
        <end position="387"/>
    </location>
</feature>
<feature type="active site" description="Acyl-thioester intermediate" evidence="1">
    <location>
        <position position="91"/>
    </location>
</feature>
<feature type="active site" description="Proton acceptor" evidence="1">
    <location>
        <position position="343"/>
    </location>
</feature>
<feature type="active site" description="Proton acceptor" evidence="1">
    <location>
        <position position="373"/>
    </location>
</feature>
<keyword id="KW-0012">Acyltransferase</keyword>
<keyword id="KW-0963">Cytoplasm</keyword>
<keyword id="KW-0276">Fatty acid metabolism</keyword>
<keyword id="KW-0442">Lipid degradation</keyword>
<keyword id="KW-0443">Lipid metabolism</keyword>
<keyword id="KW-0808">Transferase</keyword>